<gene>
    <name type="primary">AOP1</name>
    <name type="synonym">AOP1.1</name>
    <name type="ordered locus">At4g03070</name>
    <name type="ORF">T4I9.5</name>
</gene>
<proteinExistence type="evidence at transcript level"/>
<accession>Q9ZTA3</accession>
<feature type="chain" id="PRO_0000423720" description="Probable 2-oxoglutarate-dependent dioxygenase AOP1">
    <location>
        <begin position="1"/>
        <end position="322"/>
    </location>
</feature>
<feature type="domain" description="Fe2OG dioxygenase" evidence="2">
    <location>
        <begin position="165"/>
        <end position="271"/>
    </location>
</feature>
<feature type="binding site" evidence="2">
    <location>
        <position position="195"/>
    </location>
    <ligand>
        <name>Fe cation</name>
        <dbReference type="ChEBI" id="CHEBI:24875"/>
    </ligand>
</feature>
<feature type="binding site" evidence="2">
    <location>
        <position position="197"/>
    </location>
    <ligand>
        <name>Fe cation</name>
        <dbReference type="ChEBI" id="CHEBI:24875"/>
    </ligand>
</feature>
<feature type="binding site" evidence="2">
    <location>
        <position position="252"/>
    </location>
    <ligand>
        <name>Fe cation</name>
        <dbReference type="ChEBI" id="CHEBI:24875"/>
    </ligand>
</feature>
<feature type="binding site" evidence="2">
    <location>
        <position position="262"/>
    </location>
    <ligand>
        <name>2-oxoglutarate</name>
        <dbReference type="ChEBI" id="CHEBI:16810"/>
    </ligand>
</feature>
<comment type="function">
    <text evidence="1">Probable 2-oxoglutarate-dependent dioxygenase that may be involved in glucosinolates biosynthesis. May play a role in the production of aliphatic glucosinolates (By similarity).</text>
</comment>
<comment type="cofactor">
    <cofactor evidence="2">
        <name>Fe(2+)</name>
        <dbReference type="ChEBI" id="CHEBI:29033"/>
    </cofactor>
    <text evidence="2">Binds 1 Fe(2+) ion per subunit.</text>
</comment>
<comment type="similarity">
    <text evidence="3">Belongs to the iron/ascorbate-dependent oxidoreductase family.</text>
</comment>
<comment type="caution">
    <text evidence="4">AOP1, AOP2 and AOP3 are found in tandem and inverted duplications on chromosome IV and encode 2-oxoglutarate-dependent dioxygenases involved in glucosinolates biosynthesis. In cv. Columbia, AOP2 (AC Q9ZTA2) cDNA contains a 5-bp deletion that leads to a non-functional protein and AOP3 (AC Q9ZTA1) is not expressed. The functional and expressed alleles for AOP2 (AC Q945B5) and AOP3 (AC Q945B4) are found in cv. Cvi and cv. Landsberg erecta, respectively. No ecotype coexpresses both AOP2 and AOP3 genes. The catalytic role of AOP1 is still uncertain (PubMed:11251105).</text>
</comment>
<reference key="1">
    <citation type="journal article" date="2001" name="Plant Cell">
        <title>Gene duplication in the diversification of secondary metabolism: tandem 2-oxoglutarate-dependent dioxygenases control glucosinolate biosynthesis in Arabidopsis.</title>
        <authorList>
            <person name="Kliebenstein D.J."/>
            <person name="Lambrix V.M."/>
            <person name="Reichelt M."/>
            <person name="Gershenzon J."/>
            <person name="Mitchell-Olds T."/>
        </authorList>
    </citation>
    <scope>NUCLEOTIDE SEQUENCE [MRNA]</scope>
    <scope>GENE FAMILY</scope>
    <source>
        <strain>cv. Columbia</strain>
    </source>
</reference>
<reference key="2">
    <citation type="journal article" date="1999" name="Nature">
        <title>Sequence and analysis of chromosome 4 of the plant Arabidopsis thaliana.</title>
        <authorList>
            <person name="Mayer K.F.X."/>
            <person name="Schueller C."/>
            <person name="Wambutt R."/>
            <person name="Murphy G."/>
            <person name="Volckaert G."/>
            <person name="Pohl T."/>
            <person name="Duesterhoeft A."/>
            <person name="Stiekema W."/>
            <person name="Entian K.-D."/>
            <person name="Terryn N."/>
            <person name="Harris B."/>
            <person name="Ansorge W."/>
            <person name="Brandt P."/>
            <person name="Grivell L.A."/>
            <person name="Rieger M."/>
            <person name="Weichselgartner M."/>
            <person name="de Simone V."/>
            <person name="Obermaier B."/>
            <person name="Mache R."/>
            <person name="Mueller M."/>
            <person name="Kreis M."/>
            <person name="Delseny M."/>
            <person name="Puigdomenech P."/>
            <person name="Watson M."/>
            <person name="Schmidtheini T."/>
            <person name="Reichert B."/>
            <person name="Portetelle D."/>
            <person name="Perez-Alonso M."/>
            <person name="Boutry M."/>
            <person name="Bancroft I."/>
            <person name="Vos P."/>
            <person name="Hoheisel J."/>
            <person name="Zimmermann W."/>
            <person name="Wedler H."/>
            <person name="Ridley P."/>
            <person name="Langham S.-A."/>
            <person name="McCullagh B."/>
            <person name="Bilham L."/>
            <person name="Robben J."/>
            <person name="van der Schueren J."/>
            <person name="Grymonprez B."/>
            <person name="Chuang Y.-J."/>
            <person name="Vandenbussche F."/>
            <person name="Braeken M."/>
            <person name="Weltjens I."/>
            <person name="Voet M."/>
            <person name="Bastiaens I."/>
            <person name="Aert R."/>
            <person name="Defoor E."/>
            <person name="Weitzenegger T."/>
            <person name="Bothe G."/>
            <person name="Ramsperger U."/>
            <person name="Hilbert H."/>
            <person name="Braun M."/>
            <person name="Holzer E."/>
            <person name="Brandt A."/>
            <person name="Peters S."/>
            <person name="van Staveren M."/>
            <person name="Dirkse W."/>
            <person name="Mooijman P."/>
            <person name="Klein Lankhorst R."/>
            <person name="Rose M."/>
            <person name="Hauf J."/>
            <person name="Koetter P."/>
            <person name="Berneiser S."/>
            <person name="Hempel S."/>
            <person name="Feldpausch M."/>
            <person name="Lamberth S."/>
            <person name="Van den Daele H."/>
            <person name="De Keyser A."/>
            <person name="Buysshaert C."/>
            <person name="Gielen J."/>
            <person name="Villarroel R."/>
            <person name="De Clercq R."/>
            <person name="van Montagu M."/>
            <person name="Rogers J."/>
            <person name="Cronin A."/>
            <person name="Quail M.A."/>
            <person name="Bray-Allen S."/>
            <person name="Clark L."/>
            <person name="Doggett J."/>
            <person name="Hall S."/>
            <person name="Kay M."/>
            <person name="Lennard N."/>
            <person name="McLay K."/>
            <person name="Mayes R."/>
            <person name="Pettett A."/>
            <person name="Rajandream M.A."/>
            <person name="Lyne M."/>
            <person name="Benes V."/>
            <person name="Rechmann S."/>
            <person name="Borkova D."/>
            <person name="Bloecker H."/>
            <person name="Scharfe M."/>
            <person name="Grimm M."/>
            <person name="Loehnert T.-H."/>
            <person name="Dose S."/>
            <person name="de Haan M."/>
            <person name="Maarse A.C."/>
            <person name="Schaefer M."/>
            <person name="Mueller-Auer S."/>
            <person name="Gabel C."/>
            <person name="Fuchs M."/>
            <person name="Fartmann B."/>
            <person name="Granderath K."/>
            <person name="Dauner D."/>
            <person name="Herzl A."/>
            <person name="Neumann S."/>
            <person name="Argiriou A."/>
            <person name="Vitale D."/>
            <person name="Liguori R."/>
            <person name="Piravandi E."/>
            <person name="Massenet O."/>
            <person name="Quigley F."/>
            <person name="Clabauld G."/>
            <person name="Muendlein A."/>
            <person name="Felber R."/>
            <person name="Schnabl S."/>
            <person name="Hiller R."/>
            <person name="Schmidt W."/>
            <person name="Lecharny A."/>
            <person name="Aubourg S."/>
            <person name="Chefdor F."/>
            <person name="Cooke R."/>
            <person name="Berger C."/>
            <person name="Monfort A."/>
            <person name="Casacuberta E."/>
            <person name="Gibbons T."/>
            <person name="Weber N."/>
            <person name="Vandenbol M."/>
            <person name="Bargues M."/>
            <person name="Terol J."/>
            <person name="Torres A."/>
            <person name="Perez-Perez A."/>
            <person name="Purnelle B."/>
            <person name="Bent E."/>
            <person name="Johnson S."/>
            <person name="Tacon D."/>
            <person name="Jesse T."/>
            <person name="Heijnen L."/>
            <person name="Schwarz S."/>
            <person name="Scholler P."/>
            <person name="Heber S."/>
            <person name="Francs P."/>
            <person name="Bielke C."/>
            <person name="Frishman D."/>
            <person name="Haase D."/>
            <person name="Lemcke K."/>
            <person name="Mewes H.-W."/>
            <person name="Stocker S."/>
            <person name="Zaccaria P."/>
            <person name="Bevan M."/>
            <person name="Wilson R.K."/>
            <person name="de la Bastide M."/>
            <person name="Habermann K."/>
            <person name="Parnell L."/>
            <person name="Dedhia N."/>
            <person name="Gnoj L."/>
            <person name="Schutz K."/>
            <person name="Huang E."/>
            <person name="Spiegel L."/>
            <person name="Sekhon M."/>
            <person name="Murray J."/>
            <person name="Sheet P."/>
            <person name="Cordes M."/>
            <person name="Abu-Threideh J."/>
            <person name="Stoneking T."/>
            <person name="Kalicki J."/>
            <person name="Graves T."/>
            <person name="Harmon G."/>
            <person name="Edwards J."/>
            <person name="Latreille P."/>
            <person name="Courtney L."/>
            <person name="Cloud J."/>
            <person name="Abbott A."/>
            <person name="Scott K."/>
            <person name="Johnson D."/>
            <person name="Minx P."/>
            <person name="Bentley D."/>
            <person name="Fulton B."/>
            <person name="Miller N."/>
            <person name="Greco T."/>
            <person name="Kemp K."/>
            <person name="Kramer J."/>
            <person name="Fulton L."/>
            <person name="Mardis E."/>
            <person name="Dante M."/>
            <person name="Pepin K."/>
            <person name="Hillier L.W."/>
            <person name="Nelson J."/>
            <person name="Spieth J."/>
            <person name="Ryan E."/>
            <person name="Andrews S."/>
            <person name="Geisel C."/>
            <person name="Layman D."/>
            <person name="Du H."/>
            <person name="Ali J."/>
            <person name="Berghoff A."/>
            <person name="Jones K."/>
            <person name="Drone K."/>
            <person name="Cotton M."/>
            <person name="Joshu C."/>
            <person name="Antonoiu B."/>
            <person name="Zidanic M."/>
            <person name="Strong C."/>
            <person name="Sun H."/>
            <person name="Lamar B."/>
            <person name="Yordan C."/>
            <person name="Ma P."/>
            <person name="Zhong J."/>
            <person name="Preston R."/>
            <person name="Vil D."/>
            <person name="Shekher M."/>
            <person name="Matero A."/>
            <person name="Shah R."/>
            <person name="Swaby I.K."/>
            <person name="O'Shaughnessy A."/>
            <person name="Rodriguez M."/>
            <person name="Hoffman J."/>
            <person name="Till S."/>
            <person name="Granat S."/>
            <person name="Shohdy N."/>
            <person name="Hasegawa A."/>
            <person name="Hameed A."/>
            <person name="Lodhi M."/>
            <person name="Johnson A."/>
            <person name="Chen E."/>
            <person name="Marra M.A."/>
            <person name="Martienssen R."/>
            <person name="McCombie W.R."/>
        </authorList>
    </citation>
    <scope>NUCLEOTIDE SEQUENCE [LARGE SCALE GENOMIC DNA]</scope>
    <source>
        <strain>cv. Columbia</strain>
    </source>
</reference>
<reference key="3">
    <citation type="journal article" date="2017" name="Plant J.">
        <title>Araport11: a complete reannotation of the Arabidopsis thaliana reference genome.</title>
        <authorList>
            <person name="Cheng C.Y."/>
            <person name="Krishnakumar V."/>
            <person name="Chan A.P."/>
            <person name="Thibaud-Nissen F."/>
            <person name="Schobel S."/>
            <person name="Town C.D."/>
        </authorList>
    </citation>
    <scope>GENOME REANNOTATION</scope>
    <source>
        <strain>cv. Columbia</strain>
    </source>
</reference>
<organism>
    <name type="scientific">Arabidopsis thaliana</name>
    <name type="common">Mouse-ear cress</name>
    <dbReference type="NCBI Taxonomy" id="3702"/>
    <lineage>
        <taxon>Eukaryota</taxon>
        <taxon>Viridiplantae</taxon>
        <taxon>Streptophyta</taxon>
        <taxon>Embryophyta</taxon>
        <taxon>Tracheophyta</taxon>
        <taxon>Spermatophyta</taxon>
        <taxon>Magnoliopsida</taxon>
        <taxon>eudicotyledons</taxon>
        <taxon>Gunneridae</taxon>
        <taxon>Pentapetalae</taxon>
        <taxon>rosids</taxon>
        <taxon>malvids</taxon>
        <taxon>Brassicales</taxon>
        <taxon>Brassicaceae</taxon>
        <taxon>Camelineae</taxon>
        <taxon>Arabidopsis</taxon>
    </lineage>
</organism>
<name>AOP1C_ARATH</name>
<keyword id="KW-0223">Dioxygenase</keyword>
<keyword id="KW-0408">Iron</keyword>
<keyword id="KW-0479">Metal-binding</keyword>
<keyword id="KW-0560">Oxidoreductase</keyword>
<keyword id="KW-1185">Reference proteome</keyword>
<protein>
    <recommendedName>
        <fullName>Probable 2-oxoglutarate-dependent dioxygenase AOP1</fullName>
        <ecNumber>1.14.11.-</ecNumber>
    </recommendedName>
</protein>
<sequence>MDSDFVPPSVSFQLPVIDFSDQNLKPGSSKWDEVTADVLKALEDYGCFEASFDKLSVELNRSVFEAMEDLFELPIPTKQRNVSSKPFHGYLCHNLYESLGINDANVLEKVNDFTQQLWPDHGNKSISETIHLFSEQLVELDLMVRRMIMESFGIENYIDEHLNSTYYLTRLMKYTSPPDDDDDDDEETKLGLRSHTDKNIITILHQYQVDGLEVKTKDDKWIKVKPSQDSVLVMVGDSLCALLNGRLHSPYHRVIMTGKKTRYSTGLFSIPKTGVIIDSPEELVDKEHPRIFKPFEYTDFLHFFQTEAGRIAQSALHAFAAF</sequence>
<dbReference type="EC" id="1.14.11.-"/>
<dbReference type="EMBL" id="AF417855">
    <property type="protein sequence ID" value="AAL14643.1"/>
    <property type="molecule type" value="mRNA"/>
</dbReference>
<dbReference type="EMBL" id="AF069442">
    <property type="protein sequence ID" value="AAC79098.1"/>
    <property type="molecule type" value="Genomic_DNA"/>
</dbReference>
<dbReference type="EMBL" id="AL161496">
    <property type="protein sequence ID" value="CAB77792.1"/>
    <property type="molecule type" value="Genomic_DNA"/>
</dbReference>
<dbReference type="EMBL" id="CP002687">
    <property type="protein sequence ID" value="AEE82267.1"/>
    <property type="molecule type" value="Genomic_DNA"/>
</dbReference>
<dbReference type="PIR" id="T01386">
    <property type="entry name" value="T01386"/>
</dbReference>
<dbReference type="RefSeq" id="NP_192216.1">
    <property type="nucleotide sequence ID" value="NM_116541.4"/>
</dbReference>
<dbReference type="SMR" id="Q9ZTA3"/>
<dbReference type="FunCoup" id="Q9ZTA3">
    <property type="interactions" value="1"/>
</dbReference>
<dbReference type="STRING" id="3702.Q9ZTA3"/>
<dbReference type="PaxDb" id="3702-AT4G03070.1"/>
<dbReference type="ProteomicsDB" id="244408"/>
<dbReference type="EnsemblPlants" id="AT4G03070.1">
    <property type="protein sequence ID" value="AT4G03070.1"/>
    <property type="gene ID" value="AT4G03070"/>
</dbReference>
<dbReference type="GeneID" id="828100"/>
<dbReference type="Gramene" id="AT4G03070.1">
    <property type="protein sequence ID" value="AT4G03070.1"/>
    <property type="gene ID" value="AT4G03070"/>
</dbReference>
<dbReference type="KEGG" id="ath:AT4G03070"/>
<dbReference type="Araport" id="AT4G03070"/>
<dbReference type="TAIR" id="AT4G03070">
    <property type="gene designation" value="AOP1"/>
</dbReference>
<dbReference type="eggNOG" id="KOG0143">
    <property type="taxonomic scope" value="Eukaryota"/>
</dbReference>
<dbReference type="HOGENOM" id="CLU_010119_3_1_1"/>
<dbReference type="InParanoid" id="Q9ZTA3"/>
<dbReference type="OMA" id="MHKFSTQ"/>
<dbReference type="PhylomeDB" id="Q9ZTA3"/>
<dbReference type="PRO" id="PR:Q9ZTA3"/>
<dbReference type="Proteomes" id="UP000006548">
    <property type="component" value="Chromosome 4"/>
</dbReference>
<dbReference type="ExpressionAtlas" id="Q9ZTA3">
    <property type="expression patterns" value="baseline and differential"/>
</dbReference>
<dbReference type="GO" id="GO:0051213">
    <property type="term" value="F:dioxygenase activity"/>
    <property type="evidence" value="ECO:0007669"/>
    <property type="project" value="UniProtKB-KW"/>
</dbReference>
<dbReference type="GO" id="GO:0046872">
    <property type="term" value="F:metal ion binding"/>
    <property type="evidence" value="ECO:0007669"/>
    <property type="project" value="UniProtKB-KW"/>
</dbReference>
<dbReference type="FunFam" id="2.60.120.330:FF:000022">
    <property type="entry name" value="Probable 2-oxoglutarate-dependent dioxygenase AOP1.2"/>
    <property type="match status" value="1"/>
</dbReference>
<dbReference type="Gene3D" id="2.60.120.330">
    <property type="entry name" value="B-lactam Antibiotic, Isopenicillin N Synthase, Chain"/>
    <property type="match status" value="1"/>
</dbReference>
<dbReference type="InterPro" id="IPR026992">
    <property type="entry name" value="DIOX_N"/>
</dbReference>
<dbReference type="InterPro" id="IPR044861">
    <property type="entry name" value="IPNS-like_FE2OG_OXY"/>
</dbReference>
<dbReference type="InterPro" id="IPR027443">
    <property type="entry name" value="IPNS-like_sf"/>
</dbReference>
<dbReference type="InterPro" id="IPR050231">
    <property type="entry name" value="Iron_ascorbate_oxido_reductase"/>
</dbReference>
<dbReference type="InterPro" id="IPR005123">
    <property type="entry name" value="Oxoglu/Fe-dep_dioxygenase_dom"/>
</dbReference>
<dbReference type="PANTHER" id="PTHR47990">
    <property type="entry name" value="2-OXOGLUTARATE (2OG) AND FE(II)-DEPENDENT OXYGENASE SUPERFAMILY PROTEIN-RELATED"/>
    <property type="match status" value="1"/>
</dbReference>
<dbReference type="Pfam" id="PF03171">
    <property type="entry name" value="2OG-FeII_Oxy"/>
    <property type="match status" value="1"/>
</dbReference>
<dbReference type="Pfam" id="PF14226">
    <property type="entry name" value="DIOX_N"/>
    <property type="match status" value="1"/>
</dbReference>
<dbReference type="SUPFAM" id="SSF51197">
    <property type="entry name" value="Clavaminate synthase-like"/>
    <property type="match status" value="1"/>
</dbReference>
<dbReference type="PROSITE" id="PS51471">
    <property type="entry name" value="FE2OG_OXY"/>
    <property type="match status" value="1"/>
</dbReference>
<evidence type="ECO:0000250" key="1"/>
<evidence type="ECO:0000255" key="2">
    <source>
        <dbReference type="PROSITE-ProRule" id="PRU00805"/>
    </source>
</evidence>
<evidence type="ECO:0000305" key="3"/>
<evidence type="ECO:0000305" key="4">
    <source>
    </source>
</evidence>